<comment type="similarity">
    <text evidence="1">Belongs to the bacterial ribosomal protein bL36 family.</text>
</comment>
<sequence>MKVRPSVKPMCEHCKVIKRHGRVMVICPANPKHKQRQG</sequence>
<proteinExistence type="inferred from homology"/>
<protein>
    <recommendedName>
        <fullName evidence="1">Large ribosomal subunit protein bL36</fullName>
    </recommendedName>
    <alternativeName>
        <fullName evidence="2">50S ribosomal protein L36</fullName>
    </alternativeName>
</protein>
<reference key="1">
    <citation type="journal article" date="2006" name="Proc. Natl. Acad. Sci. U.S.A.">
        <title>Comparative genomics of the lactic acid bacteria.</title>
        <authorList>
            <person name="Makarova K.S."/>
            <person name="Slesarev A."/>
            <person name="Wolf Y.I."/>
            <person name="Sorokin A."/>
            <person name="Mirkin B."/>
            <person name="Koonin E.V."/>
            <person name="Pavlov A."/>
            <person name="Pavlova N."/>
            <person name="Karamychev V."/>
            <person name="Polouchine N."/>
            <person name="Shakhova V."/>
            <person name="Grigoriev I."/>
            <person name="Lou Y."/>
            <person name="Rohksar D."/>
            <person name="Lucas S."/>
            <person name="Huang K."/>
            <person name="Goodstein D.M."/>
            <person name="Hawkins T."/>
            <person name="Plengvidhya V."/>
            <person name="Welker D."/>
            <person name="Hughes J."/>
            <person name="Goh Y."/>
            <person name="Benson A."/>
            <person name="Baldwin K."/>
            <person name="Lee J.-H."/>
            <person name="Diaz-Muniz I."/>
            <person name="Dosti B."/>
            <person name="Smeianov V."/>
            <person name="Wechter W."/>
            <person name="Barabote R."/>
            <person name="Lorca G."/>
            <person name="Altermann E."/>
            <person name="Barrangou R."/>
            <person name="Ganesan B."/>
            <person name="Xie Y."/>
            <person name="Rawsthorne H."/>
            <person name="Tamir D."/>
            <person name="Parker C."/>
            <person name="Breidt F."/>
            <person name="Broadbent J.R."/>
            <person name="Hutkins R."/>
            <person name="O'Sullivan D."/>
            <person name="Steele J."/>
            <person name="Unlu G."/>
            <person name="Saier M.H. Jr."/>
            <person name="Klaenhammer T."/>
            <person name="Richardson P."/>
            <person name="Kozyavkin S."/>
            <person name="Weimer B.C."/>
            <person name="Mills D.A."/>
        </authorList>
    </citation>
    <scope>NUCLEOTIDE SEQUENCE [LARGE SCALE GENOMIC DNA]</scope>
    <source>
        <strain>ATCC BAA-365 / Lb-18</strain>
    </source>
</reference>
<feature type="chain" id="PRO_0000302224" description="Large ribosomal subunit protein bL36">
    <location>
        <begin position="1"/>
        <end position="38"/>
    </location>
</feature>
<gene>
    <name evidence="1" type="primary">rpmJ</name>
    <name type="ordered locus">LBUL_0373</name>
</gene>
<evidence type="ECO:0000255" key="1">
    <source>
        <dbReference type="HAMAP-Rule" id="MF_00251"/>
    </source>
</evidence>
<evidence type="ECO:0000305" key="2"/>
<keyword id="KW-0687">Ribonucleoprotein</keyword>
<keyword id="KW-0689">Ribosomal protein</keyword>
<dbReference type="EMBL" id="CP000412">
    <property type="protein sequence ID" value="ABJ58030.1"/>
    <property type="molecule type" value="Genomic_DNA"/>
</dbReference>
<dbReference type="RefSeq" id="WP_002878160.1">
    <property type="nucleotide sequence ID" value="NC_008529.1"/>
</dbReference>
<dbReference type="SMR" id="Q04BZ2"/>
<dbReference type="GeneID" id="93290578"/>
<dbReference type="KEGG" id="lbu:LBUL_0373"/>
<dbReference type="HOGENOM" id="CLU_135723_6_2_9"/>
<dbReference type="BioCyc" id="LDEL321956:LBUL_RS09845-MONOMER"/>
<dbReference type="GO" id="GO:0005737">
    <property type="term" value="C:cytoplasm"/>
    <property type="evidence" value="ECO:0007669"/>
    <property type="project" value="UniProtKB-ARBA"/>
</dbReference>
<dbReference type="GO" id="GO:1990904">
    <property type="term" value="C:ribonucleoprotein complex"/>
    <property type="evidence" value="ECO:0007669"/>
    <property type="project" value="UniProtKB-KW"/>
</dbReference>
<dbReference type="GO" id="GO:0005840">
    <property type="term" value="C:ribosome"/>
    <property type="evidence" value="ECO:0007669"/>
    <property type="project" value="UniProtKB-KW"/>
</dbReference>
<dbReference type="GO" id="GO:0003735">
    <property type="term" value="F:structural constituent of ribosome"/>
    <property type="evidence" value="ECO:0007669"/>
    <property type="project" value="InterPro"/>
</dbReference>
<dbReference type="GO" id="GO:0006412">
    <property type="term" value="P:translation"/>
    <property type="evidence" value="ECO:0007669"/>
    <property type="project" value="UniProtKB-UniRule"/>
</dbReference>
<dbReference type="HAMAP" id="MF_00251">
    <property type="entry name" value="Ribosomal_bL36"/>
    <property type="match status" value="1"/>
</dbReference>
<dbReference type="InterPro" id="IPR000473">
    <property type="entry name" value="Ribosomal_bL36"/>
</dbReference>
<dbReference type="InterPro" id="IPR035977">
    <property type="entry name" value="Ribosomal_bL36_sp"/>
</dbReference>
<dbReference type="NCBIfam" id="TIGR01022">
    <property type="entry name" value="rpmJ_bact"/>
    <property type="match status" value="1"/>
</dbReference>
<dbReference type="PANTHER" id="PTHR42888">
    <property type="entry name" value="50S RIBOSOMAL PROTEIN L36, CHLOROPLASTIC"/>
    <property type="match status" value="1"/>
</dbReference>
<dbReference type="PANTHER" id="PTHR42888:SF1">
    <property type="entry name" value="LARGE RIBOSOMAL SUBUNIT PROTEIN BL36C"/>
    <property type="match status" value="1"/>
</dbReference>
<dbReference type="Pfam" id="PF00444">
    <property type="entry name" value="Ribosomal_L36"/>
    <property type="match status" value="1"/>
</dbReference>
<dbReference type="SUPFAM" id="SSF57840">
    <property type="entry name" value="Ribosomal protein L36"/>
    <property type="match status" value="1"/>
</dbReference>
<dbReference type="PROSITE" id="PS00828">
    <property type="entry name" value="RIBOSOMAL_L36"/>
    <property type="match status" value="1"/>
</dbReference>
<accession>Q04BZ2</accession>
<name>RL36_LACDB</name>
<organism>
    <name type="scientific">Lactobacillus delbrueckii subsp. bulgaricus (strain ATCC BAA-365 / Lb-18)</name>
    <dbReference type="NCBI Taxonomy" id="321956"/>
    <lineage>
        <taxon>Bacteria</taxon>
        <taxon>Bacillati</taxon>
        <taxon>Bacillota</taxon>
        <taxon>Bacilli</taxon>
        <taxon>Lactobacillales</taxon>
        <taxon>Lactobacillaceae</taxon>
        <taxon>Lactobacillus</taxon>
    </lineage>
</organism>